<proteinExistence type="evidence at protein level"/>
<sequence length="221" mass="24899">TVDFASESANERETQKEILDKHNALRRSVRPTARNMLQMEWNFNAAQNATRWADRCSFAHSPQHLRTVGELKCGENLFMSSHPFPWTRVIQSWYDENKNFKYGVGANPPNAVIGHYTQIVWYKSYLLGCAAARCPSSSYNYYYVCHYCPAGNIIGKIATPYKSGPPCGDCPSACVNGLCTNPCKHVDRYSNCNSLVQQISCQSNNMNTDCPASCFCHNEIK</sequence>
<accession>P0CB15</accession>
<organism>
    <name type="scientific">Protobothrops flavoviridis</name>
    <name type="common">Habu</name>
    <name type="synonym">Trimeresurus flavoviridis</name>
    <dbReference type="NCBI Taxonomy" id="88087"/>
    <lineage>
        <taxon>Eukaryota</taxon>
        <taxon>Metazoa</taxon>
        <taxon>Chordata</taxon>
        <taxon>Craniata</taxon>
        <taxon>Vertebrata</taxon>
        <taxon>Euteleostomi</taxon>
        <taxon>Lepidosauria</taxon>
        <taxon>Squamata</taxon>
        <taxon>Bifurcata</taxon>
        <taxon>Unidentata</taxon>
        <taxon>Episquamata</taxon>
        <taxon>Toxicofera</taxon>
        <taxon>Serpentes</taxon>
        <taxon>Colubroidea</taxon>
        <taxon>Viperidae</taxon>
        <taxon>Crotalinae</taxon>
        <taxon>Protobothrops</taxon>
    </lineage>
</organism>
<name>CRIS_PROFL</name>
<evidence type="ECO:0000255" key="1"/>
<evidence type="ECO:0000255" key="2">
    <source>
        <dbReference type="PROSITE-ProRule" id="PRU01005"/>
    </source>
</evidence>
<evidence type="ECO:0000269" key="3">
    <source>
    </source>
</evidence>
<evidence type="ECO:0000305" key="4"/>
<protein>
    <recommendedName>
        <fullName>Serotriflin</fullName>
    </recommendedName>
</protein>
<keyword id="KW-0903">Direct protein sequencing</keyword>
<keyword id="KW-1015">Disulfide bond</keyword>
<keyword id="KW-0325">Glycoprotein</keyword>
<keyword id="KW-0964">Secreted</keyword>
<feature type="chain" id="PRO_0000380641" description="Serotriflin">
    <location>
        <begin position="1"/>
        <end position="221"/>
    </location>
</feature>
<feature type="domain" description="SCP">
    <location>
        <begin position="19"/>
        <end position="147"/>
    </location>
</feature>
<feature type="domain" description="ShKT" evidence="2">
    <location>
        <begin position="183"/>
        <end position="216"/>
    </location>
</feature>
<feature type="glycosylation site" description="N-linked (GlcNAc...) asparagine" evidence="1">
    <location>
        <position position="48"/>
    </location>
</feature>
<feature type="disulfide bond" evidence="2">
    <location>
        <begin position="56"/>
        <end position="134"/>
    </location>
</feature>
<feature type="disulfide bond" evidence="2">
    <location>
        <begin position="73"/>
        <end position="148"/>
    </location>
</feature>
<feature type="disulfide bond" evidence="2">
    <location>
        <begin position="129"/>
        <end position="145"/>
    </location>
</feature>
<feature type="disulfide bond" evidence="2">
    <location>
        <begin position="167"/>
        <end position="174"/>
    </location>
</feature>
<feature type="disulfide bond" evidence="2">
    <location>
        <begin position="170"/>
        <end position="179"/>
    </location>
</feature>
<feature type="disulfide bond" evidence="2">
    <location>
        <begin position="183"/>
        <end position="216"/>
    </location>
</feature>
<feature type="disulfide bond" evidence="2">
    <location>
        <begin position="192"/>
        <end position="210"/>
    </location>
</feature>
<feature type="disulfide bond" evidence="2">
    <location>
        <begin position="201"/>
        <end position="214"/>
    </location>
</feature>
<dbReference type="SMR" id="P0CB15"/>
<dbReference type="GO" id="GO:0005576">
    <property type="term" value="C:extracellular region"/>
    <property type="evidence" value="ECO:0007669"/>
    <property type="project" value="UniProtKB-SubCell"/>
</dbReference>
<dbReference type="CDD" id="cd05383">
    <property type="entry name" value="CAP_CRISP"/>
    <property type="match status" value="1"/>
</dbReference>
<dbReference type="FunFam" id="1.10.10.740:FF:000001">
    <property type="entry name" value="Cysteine-rich secretory protein 2"/>
    <property type="match status" value="1"/>
</dbReference>
<dbReference type="FunFam" id="3.40.33.10:FF:000005">
    <property type="entry name" value="Cysteine-rich secretory protein 2"/>
    <property type="match status" value="1"/>
</dbReference>
<dbReference type="Gene3D" id="3.40.33.10">
    <property type="entry name" value="CAP"/>
    <property type="match status" value="1"/>
</dbReference>
<dbReference type="Gene3D" id="1.10.10.740">
    <property type="entry name" value="Crisp domain"/>
    <property type="match status" value="1"/>
</dbReference>
<dbReference type="InterPro" id="IPR018244">
    <property type="entry name" value="Allrgn_V5/Tpx1_CS"/>
</dbReference>
<dbReference type="InterPro" id="IPR014044">
    <property type="entry name" value="CAP_dom"/>
</dbReference>
<dbReference type="InterPro" id="IPR035940">
    <property type="entry name" value="CAP_sf"/>
</dbReference>
<dbReference type="InterPro" id="IPR042076">
    <property type="entry name" value="Crisp-like_dom"/>
</dbReference>
<dbReference type="InterPro" id="IPR001283">
    <property type="entry name" value="CRISP-related"/>
</dbReference>
<dbReference type="InterPro" id="IPR013871">
    <property type="entry name" value="Cysteine_rich_secretory"/>
</dbReference>
<dbReference type="InterPro" id="IPR034117">
    <property type="entry name" value="SCP_CRISP"/>
</dbReference>
<dbReference type="InterPro" id="IPR003582">
    <property type="entry name" value="ShKT_dom"/>
</dbReference>
<dbReference type="PANTHER" id="PTHR10334">
    <property type="entry name" value="CYSTEINE-RICH SECRETORY PROTEIN-RELATED"/>
    <property type="match status" value="1"/>
</dbReference>
<dbReference type="Pfam" id="PF00188">
    <property type="entry name" value="CAP"/>
    <property type="match status" value="1"/>
</dbReference>
<dbReference type="Pfam" id="PF08562">
    <property type="entry name" value="Crisp"/>
    <property type="match status" value="1"/>
</dbReference>
<dbReference type="PRINTS" id="PR00837">
    <property type="entry name" value="V5TPXLIKE"/>
</dbReference>
<dbReference type="SMART" id="SM00198">
    <property type="entry name" value="SCP"/>
    <property type="match status" value="1"/>
</dbReference>
<dbReference type="SUPFAM" id="SSF57546">
    <property type="entry name" value="Crisp domain-like"/>
    <property type="match status" value="1"/>
</dbReference>
<dbReference type="SUPFAM" id="SSF55797">
    <property type="entry name" value="PR-1-like"/>
    <property type="match status" value="1"/>
</dbReference>
<dbReference type="PROSITE" id="PS01009">
    <property type="entry name" value="CRISP_1"/>
    <property type="match status" value="1"/>
</dbReference>
<dbReference type="PROSITE" id="PS01010">
    <property type="entry name" value="CRISP_2"/>
    <property type="match status" value="1"/>
</dbReference>
<dbReference type="PROSITE" id="PS51670">
    <property type="entry name" value="SHKT"/>
    <property type="match status" value="1"/>
</dbReference>
<reference key="1">
    <citation type="journal article" date="2008" name="Biochim. Biophys. Acta">
        <title>Serotriflin, a CRISP family protein with binding affinity for small serum protein-2 in snake serum.</title>
        <authorList>
            <person name="Aoki N."/>
            <person name="Sakiyama A."/>
            <person name="Kuroki K."/>
            <person name="Maenaka K."/>
            <person name="Kohda D."/>
            <person name="Deshimaru M."/>
            <person name="Terada S."/>
        </authorList>
    </citation>
    <scope>NUCLEOTIDE SEQUENCE [MRNA]</scope>
    <scope>PROTEIN SEQUENCE OF 1-39</scope>
    <scope>SUBUNIT WITH SSP-2</scope>
    <scope>MASS SPECTROMETRY</scope>
    <source>
        <tissue>Liver</tissue>
        <tissue>Serum</tissue>
    </source>
</reference>
<comment type="subunit">
    <text evidence="3">Forms a stable, non-covalent complex with SSP-2.</text>
</comment>
<comment type="subcellular location">
    <subcellularLocation>
        <location>Secreted</location>
    </subcellularLocation>
</comment>
<comment type="mass spectrometry" mass="27645.7" method="MALDI" evidence="3"/>
<comment type="similarity">
    <text evidence="4">Belongs to the CRISP family.</text>
</comment>